<reference key="1">
    <citation type="journal article" date="2002" name="Eukaryot. Cell">
        <title>Evolutionary analyses of ABC transporters of Dictyostelium discoideum.</title>
        <authorList>
            <person name="Anjard C."/>
            <person name="Loomis W.F."/>
        </authorList>
    </citation>
    <scope>NUCLEOTIDE SEQUENCE [GENOMIC DNA]</scope>
    <scope>NOMENCLATURE</scope>
    <source>
        <strain>AX4</strain>
    </source>
</reference>
<reference key="2">
    <citation type="journal article" date="2005" name="Nature">
        <title>The genome of the social amoeba Dictyostelium discoideum.</title>
        <authorList>
            <person name="Eichinger L."/>
            <person name="Pachebat J.A."/>
            <person name="Gloeckner G."/>
            <person name="Rajandream M.A."/>
            <person name="Sucgang R."/>
            <person name="Berriman M."/>
            <person name="Song J."/>
            <person name="Olsen R."/>
            <person name="Szafranski K."/>
            <person name="Xu Q."/>
            <person name="Tunggal B."/>
            <person name="Kummerfeld S."/>
            <person name="Madera M."/>
            <person name="Konfortov B.A."/>
            <person name="Rivero F."/>
            <person name="Bankier A.T."/>
            <person name="Lehmann R."/>
            <person name="Hamlin N."/>
            <person name="Davies R."/>
            <person name="Gaudet P."/>
            <person name="Fey P."/>
            <person name="Pilcher K."/>
            <person name="Chen G."/>
            <person name="Saunders D."/>
            <person name="Sodergren E.J."/>
            <person name="Davis P."/>
            <person name="Kerhornou A."/>
            <person name="Nie X."/>
            <person name="Hall N."/>
            <person name="Anjard C."/>
            <person name="Hemphill L."/>
            <person name="Bason N."/>
            <person name="Farbrother P."/>
            <person name="Desany B."/>
            <person name="Just E."/>
            <person name="Morio T."/>
            <person name="Rost R."/>
            <person name="Churcher C.M."/>
            <person name="Cooper J."/>
            <person name="Haydock S."/>
            <person name="van Driessche N."/>
            <person name="Cronin A."/>
            <person name="Goodhead I."/>
            <person name="Muzny D.M."/>
            <person name="Mourier T."/>
            <person name="Pain A."/>
            <person name="Lu M."/>
            <person name="Harper D."/>
            <person name="Lindsay R."/>
            <person name="Hauser H."/>
            <person name="James K.D."/>
            <person name="Quiles M."/>
            <person name="Madan Babu M."/>
            <person name="Saito T."/>
            <person name="Buchrieser C."/>
            <person name="Wardroper A."/>
            <person name="Felder M."/>
            <person name="Thangavelu M."/>
            <person name="Johnson D."/>
            <person name="Knights A."/>
            <person name="Loulseged H."/>
            <person name="Mungall K.L."/>
            <person name="Oliver K."/>
            <person name="Price C."/>
            <person name="Quail M.A."/>
            <person name="Urushihara H."/>
            <person name="Hernandez J."/>
            <person name="Rabbinowitsch E."/>
            <person name="Steffen D."/>
            <person name="Sanders M."/>
            <person name="Ma J."/>
            <person name="Kohara Y."/>
            <person name="Sharp S."/>
            <person name="Simmonds M.N."/>
            <person name="Spiegler S."/>
            <person name="Tivey A."/>
            <person name="Sugano S."/>
            <person name="White B."/>
            <person name="Walker D."/>
            <person name="Woodward J.R."/>
            <person name="Winckler T."/>
            <person name="Tanaka Y."/>
            <person name="Shaulsky G."/>
            <person name="Schleicher M."/>
            <person name="Weinstock G.M."/>
            <person name="Rosenthal A."/>
            <person name="Cox E.C."/>
            <person name="Chisholm R.L."/>
            <person name="Gibbs R.A."/>
            <person name="Loomis W.F."/>
            <person name="Platzer M."/>
            <person name="Kay R.R."/>
            <person name="Williams J.G."/>
            <person name="Dear P.H."/>
            <person name="Noegel A.A."/>
            <person name="Barrell B.G."/>
            <person name="Kuspa A."/>
        </authorList>
    </citation>
    <scope>NUCLEOTIDE SEQUENCE [LARGE SCALE GENOMIC DNA]</scope>
    <source>
        <strain>AX4</strain>
    </source>
</reference>
<evidence type="ECO:0000255" key="1"/>
<evidence type="ECO:0000255" key="2">
    <source>
        <dbReference type="PROSITE-ProRule" id="PRU00434"/>
    </source>
</evidence>
<evidence type="ECO:0000256" key="3">
    <source>
        <dbReference type="SAM" id="MobiDB-lite"/>
    </source>
</evidence>
<evidence type="ECO:0000305" key="4"/>
<name>ABCG1_DICDI</name>
<dbReference type="EMBL" id="AF482380">
    <property type="protein sequence ID" value="AAL91485.1"/>
    <property type="status" value="ALT_SEQ"/>
    <property type="molecule type" value="Genomic_DNA"/>
</dbReference>
<dbReference type="EMBL" id="AAFI02000005">
    <property type="protein sequence ID" value="EAL71957.1"/>
    <property type="molecule type" value="Genomic_DNA"/>
</dbReference>
<dbReference type="RefSeq" id="XP_646017.1">
    <property type="nucleotide sequence ID" value="XM_640925.1"/>
</dbReference>
<dbReference type="SMR" id="Q55DW4"/>
<dbReference type="FunCoup" id="Q55DW4">
    <property type="interactions" value="14"/>
</dbReference>
<dbReference type="STRING" id="44689.Q55DW4"/>
<dbReference type="TCDB" id="3.A.1.204.13">
    <property type="family name" value="the atp-binding cassette (abc) superfamily"/>
</dbReference>
<dbReference type="PaxDb" id="44689-DDB0191516"/>
<dbReference type="EnsemblProtists" id="EAL71957">
    <property type="protein sequence ID" value="EAL71957"/>
    <property type="gene ID" value="DDB_G0269214"/>
</dbReference>
<dbReference type="GeneID" id="8616965"/>
<dbReference type="KEGG" id="ddi:DDB_G0269214"/>
<dbReference type="dictyBase" id="DDB_G0269214">
    <property type="gene designation" value="abcG1"/>
</dbReference>
<dbReference type="VEuPathDB" id="AmoebaDB:DDB_G0269214"/>
<dbReference type="eggNOG" id="KOG0061">
    <property type="taxonomic scope" value="Eukaryota"/>
</dbReference>
<dbReference type="HOGENOM" id="CLU_000604_57_8_1"/>
<dbReference type="InParanoid" id="Q55DW4"/>
<dbReference type="OMA" id="TEQPVEM"/>
<dbReference type="PhylomeDB" id="Q55DW4"/>
<dbReference type="Reactome" id="R-DDI-1369062">
    <property type="pathway name" value="ABC transporters in lipid homeostasis"/>
</dbReference>
<dbReference type="Reactome" id="R-DDI-8964058">
    <property type="pathway name" value="HDL remodeling"/>
</dbReference>
<dbReference type="PRO" id="PR:Q55DW4"/>
<dbReference type="Proteomes" id="UP000002195">
    <property type="component" value="Chromosome 1"/>
</dbReference>
<dbReference type="GO" id="GO:0016020">
    <property type="term" value="C:membrane"/>
    <property type="evidence" value="ECO:0000318"/>
    <property type="project" value="GO_Central"/>
</dbReference>
<dbReference type="GO" id="GO:0140359">
    <property type="term" value="F:ABC-type transporter activity"/>
    <property type="evidence" value="ECO:0007669"/>
    <property type="project" value="InterPro"/>
</dbReference>
<dbReference type="GO" id="GO:0005524">
    <property type="term" value="F:ATP binding"/>
    <property type="evidence" value="ECO:0007669"/>
    <property type="project" value="UniProtKB-KW"/>
</dbReference>
<dbReference type="GO" id="GO:0016887">
    <property type="term" value="F:ATP hydrolysis activity"/>
    <property type="evidence" value="ECO:0007669"/>
    <property type="project" value="InterPro"/>
</dbReference>
<dbReference type="GO" id="GO:0042626">
    <property type="term" value="F:ATPase-coupled transmembrane transporter activity"/>
    <property type="evidence" value="ECO:0000318"/>
    <property type="project" value="GO_Central"/>
</dbReference>
<dbReference type="GO" id="GO:0030587">
    <property type="term" value="P:sorocarp development"/>
    <property type="evidence" value="ECO:0007669"/>
    <property type="project" value="UniProtKB-ARBA"/>
</dbReference>
<dbReference type="GO" id="GO:0055085">
    <property type="term" value="P:transmembrane transport"/>
    <property type="evidence" value="ECO:0000318"/>
    <property type="project" value="GO_Central"/>
</dbReference>
<dbReference type="FunFam" id="3.40.50.300:FF:003543">
    <property type="entry name" value="Predicted protein"/>
    <property type="match status" value="1"/>
</dbReference>
<dbReference type="Gene3D" id="3.40.50.300">
    <property type="entry name" value="P-loop containing nucleotide triphosphate hydrolases"/>
    <property type="match status" value="1"/>
</dbReference>
<dbReference type="InterPro" id="IPR003593">
    <property type="entry name" value="AAA+_ATPase"/>
</dbReference>
<dbReference type="InterPro" id="IPR013525">
    <property type="entry name" value="ABC2_TM"/>
</dbReference>
<dbReference type="InterPro" id="IPR003439">
    <property type="entry name" value="ABC_transporter-like_ATP-bd"/>
</dbReference>
<dbReference type="InterPro" id="IPR017871">
    <property type="entry name" value="ABC_transporter-like_CS"/>
</dbReference>
<dbReference type="InterPro" id="IPR043926">
    <property type="entry name" value="ABCG_dom"/>
</dbReference>
<dbReference type="InterPro" id="IPR050352">
    <property type="entry name" value="ABCG_transporters"/>
</dbReference>
<dbReference type="InterPro" id="IPR027417">
    <property type="entry name" value="P-loop_NTPase"/>
</dbReference>
<dbReference type="InterPro" id="IPR010929">
    <property type="entry name" value="PDR_CDR_ABC"/>
</dbReference>
<dbReference type="PANTHER" id="PTHR48041:SF28">
    <property type="entry name" value="ABC TRANSPORTER G FAMILY MEMBER 1"/>
    <property type="match status" value="1"/>
</dbReference>
<dbReference type="PANTHER" id="PTHR48041">
    <property type="entry name" value="ABC TRANSPORTER G FAMILY MEMBER 28"/>
    <property type="match status" value="1"/>
</dbReference>
<dbReference type="Pfam" id="PF01061">
    <property type="entry name" value="ABC2_membrane"/>
    <property type="match status" value="1"/>
</dbReference>
<dbReference type="Pfam" id="PF19055">
    <property type="entry name" value="ABC2_membrane_7"/>
    <property type="match status" value="1"/>
</dbReference>
<dbReference type="Pfam" id="PF00005">
    <property type="entry name" value="ABC_tran"/>
    <property type="match status" value="1"/>
</dbReference>
<dbReference type="Pfam" id="PF06422">
    <property type="entry name" value="PDR_CDR"/>
    <property type="match status" value="1"/>
</dbReference>
<dbReference type="SMART" id="SM00382">
    <property type="entry name" value="AAA"/>
    <property type="match status" value="1"/>
</dbReference>
<dbReference type="SUPFAM" id="SSF52540">
    <property type="entry name" value="P-loop containing nucleoside triphosphate hydrolases"/>
    <property type="match status" value="1"/>
</dbReference>
<dbReference type="PROSITE" id="PS00211">
    <property type="entry name" value="ABC_TRANSPORTER_1"/>
    <property type="match status" value="1"/>
</dbReference>
<dbReference type="PROSITE" id="PS50893">
    <property type="entry name" value="ABC_TRANSPORTER_2"/>
    <property type="match status" value="1"/>
</dbReference>
<keyword id="KW-0067">ATP-binding</keyword>
<keyword id="KW-0175">Coiled coil</keyword>
<keyword id="KW-0472">Membrane</keyword>
<keyword id="KW-0547">Nucleotide-binding</keyword>
<keyword id="KW-1185">Reference proteome</keyword>
<keyword id="KW-0812">Transmembrane</keyword>
<keyword id="KW-1133">Transmembrane helix</keyword>
<keyword id="KW-0813">Transport</keyword>
<sequence>MDSNNNNNNENEAFSGASESSEFRKIVEENENEREFEQSNPSPPEYSNYENKDDGINLETINPNISLDNNNNNNQNNQNNQNNNNNNNNQNNNIINNLNKKNKKRSTFKNRIDFSFKDINHYVQITEKGKKKKISKQILTNINGHIESGTIFAIMGPSGAGKTTLLDILAHRLNINGSGTMYLNGNKSDFNIFKKLCGYVTQSDSLMPSLTVRETLNFYAQLKMPRDVPLKEKLQRVQDIIDEMGLNRCADTLVGTADNKIRGISGGERRRVTISIELLTGPSVILLDEPTSGLDASTSFYVMSALKKLAKSGRTIICTIHQPRSNIYDMFDNLLLLGDGNTIYYGKANKALEYFNANGYHCSEKTNPADFFLDLINTQVEDQADSDDDDYNDEEEEIGGGGGGSGGGAGGIEDIGISISPTMNGSAVDNIKNNELKQQQQQQQQQQQSTDGRARRRIKKLTKEEMVILKKEYPNSEQGLRVNETLDNISKENRTDFKYEKTRGPNFLTQFSLLLGREVTNAKRHPMAFKVNLIQAIFQGLLCGIVYYQLGLGQSSVQSRTGVVAFIIMGVSFPAVMSTIHVFPDVITIFLKDRASGVYDTLPFFLAKSFMDACIAVLLPMVTATIVYWMTNQRVDPFYSAAPFFRFVLMLVLASQTCLSLGVLISSSVPNVQVGTAVAPLIVILFFLFSGFFINLNDVPGWLVWFPYISFFRYMIEAAVINAFKDVHFTCTDSQKIGGVCPVQYGNNVIENMGYDIDHFWRNVWILVLYIIGFRVLTFLVLKLKSRNKFKQE</sequence>
<accession>Q55DW4</accession>
<accession>Q8T691</accession>
<protein>
    <recommendedName>
        <fullName>ABC transporter G family member 1</fullName>
    </recommendedName>
    <alternativeName>
        <fullName>ABC transporter ABCG.1</fullName>
    </alternativeName>
</protein>
<organism>
    <name type="scientific">Dictyostelium discoideum</name>
    <name type="common">Social amoeba</name>
    <dbReference type="NCBI Taxonomy" id="44689"/>
    <lineage>
        <taxon>Eukaryota</taxon>
        <taxon>Amoebozoa</taxon>
        <taxon>Evosea</taxon>
        <taxon>Eumycetozoa</taxon>
        <taxon>Dictyostelia</taxon>
        <taxon>Dictyosteliales</taxon>
        <taxon>Dictyosteliaceae</taxon>
        <taxon>Dictyostelium</taxon>
    </lineage>
</organism>
<comment type="subcellular location">
    <subcellularLocation>
        <location evidence="4">Membrane</location>
        <topology evidence="4">Multi-pass membrane protein</topology>
    </subcellularLocation>
</comment>
<comment type="similarity">
    <text evidence="4">Belongs to the ABC transporter superfamily. ABCG family.</text>
</comment>
<comment type="sequence caution" evidence="4">
    <conflict type="erroneous termination">
        <sequence resource="EMBL-CDS" id="AAL91485"/>
    </conflict>
    <text>Extended C-terminus.</text>
</comment>
<feature type="chain" id="PRO_0000391390" description="ABC transporter G family member 1">
    <location>
        <begin position="1"/>
        <end position="793"/>
    </location>
</feature>
<feature type="transmembrane region" description="Helical" evidence="1">
    <location>
        <begin position="533"/>
        <end position="553"/>
    </location>
</feature>
<feature type="transmembrane region" description="Helical" evidence="1">
    <location>
        <begin position="563"/>
        <end position="583"/>
    </location>
</feature>
<feature type="transmembrane region" description="Helical" evidence="1">
    <location>
        <begin position="610"/>
        <end position="630"/>
    </location>
</feature>
<feature type="transmembrane region" description="Helical" evidence="1">
    <location>
        <begin position="647"/>
        <end position="667"/>
    </location>
</feature>
<feature type="transmembrane region" description="Helical" evidence="1">
    <location>
        <begin position="674"/>
        <end position="694"/>
    </location>
</feature>
<feature type="transmembrane region" description="Helical" evidence="1">
    <location>
        <begin position="701"/>
        <end position="721"/>
    </location>
</feature>
<feature type="transmembrane region" description="Helical" evidence="1">
    <location>
        <begin position="764"/>
        <end position="784"/>
    </location>
</feature>
<feature type="domain" description="ABC transporter" evidence="2">
    <location>
        <begin position="123"/>
        <end position="364"/>
    </location>
</feature>
<feature type="domain" description="ABC transmembrane type-2">
    <location>
        <begin position="527"/>
        <end position="785"/>
    </location>
</feature>
<feature type="region of interest" description="Disordered" evidence="3">
    <location>
        <begin position="1"/>
        <end position="96"/>
    </location>
</feature>
<feature type="region of interest" description="Disordered" evidence="3">
    <location>
        <begin position="382"/>
        <end position="457"/>
    </location>
</feature>
<feature type="coiled-coil region" evidence="1">
    <location>
        <begin position="67"/>
        <end position="102"/>
    </location>
</feature>
<feature type="compositionally biased region" description="Low complexity" evidence="3">
    <location>
        <begin position="1"/>
        <end position="20"/>
    </location>
</feature>
<feature type="compositionally biased region" description="Basic and acidic residues" evidence="3">
    <location>
        <begin position="21"/>
        <end position="37"/>
    </location>
</feature>
<feature type="compositionally biased region" description="Polar residues" evidence="3">
    <location>
        <begin position="59"/>
        <end position="68"/>
    </location>
</feature>
<feature type="compositionally biased region" description="Low complexity" evidence="3">
    <location>
        <begin position="69"/>
        <end position="96"/>
    </location>
</feature>
<feature type="compositionally biased region" description="Acidic residues" evidence="3">
    <location>
        <begin position="382"/>
        <end position="398"/>
    </location>
</feature>
<feature type="compositionally biased region" description="Gly residues" evidence="3">
    <location>
        <begin position="399"/>
        <end position="413"/>
    </location>
</feature>
<feature type="compositionally biased region" description="Polar residues" evidence="3">
    <location>
        <begin position="421"/>
        <end position="437"/>
    </location>
</feature>
<feature type="compositionally biased region" description="Low complexity" evidence="3">
    <location>
        <begin position="438"/>
        <end position="448"/>
    </location>
</feature>
<feature type="binding site" evidence="2">
    <location>
        <begin position="156"/>
        <end position="163"/>
    </location>
    <ligand>
        <name>ATP</name>
        <dbReference type="ChEBI" id="CHEBI:30616"/>
    </ligand>
</feature>
<proteinExistence type="inferred from homology"/>
<gene>
    <name type="primary">abcG1</name>
    <name type="ORF">DDB_G0269214</name>
</gene>